<accession>P38591</accession>
<gene>
    <name evidence="1" type="primary">MT-ATP6</name>
    <name type="synonym">ATP6</name>
    <name type="synonym">ATPASE6</name>
    <name type="synonym">MTATP6</name>
</gene>
<dbReference type="EMBL" id="X72004">
    <property type="protein sequence ID" value="CAA50882.1"/>
    <property type="molecule type" value="Genomic_DNA"/>
</dbReference>
<dbReference type="PIR" id="S41840">
    <property type="entry name" value="S41840"/>
</dbReference>
<dbReference type="RefSeq" id="NP_007074.1">
    <property type="nucleotide sequence ID" value="NC_001602.1"/>
</dbReference>
<dbReference type="SMR" id="P38591"/>
<dbReference type="GeneID" id="807757"/>
<dbReference type="CTD" id="4508"/>
<dbReference type="GO" id="GO:0005743">
    <property type="term" value="C:mitochondrial inner membrane"/>
    <property type="evidence" value="ECO:0007669"/>
    <property type="project" value="UniProtKB-SubCell"/>
</dbReference>
<dbReference type="GO" id="GO:0045259">
    <property type="term" value="C:proton-transporting ATP synthase complex"/>
    <property type="evidence" value="ECO:0000250"/>
    <property type="project" value="UniProtKB"/>
</dbReference>
<dbReference type="GO" id="GO:0015252">
    <property type="term" value="F:proton channel activity"/>
    <property type="evidence" value="ECO:0000250"/>
    <property type="project" value="UniProtKB"/>
</dbReference>
<dbReference type="GO" id="GO:0046933">
    <property type="term" value="F:proton-transporting ATP synthase activity, rotational mechanism"/>
    <property type="evidence" value="ECO:0007669"/>
    <property type="project" value="TreeGrafter"/>
</dbReference>
<dbReference type="GO" id="GO:0015986">
    <property type="term" value="P:proton motive force-driven ATP synthesis"/>
    <property type="evidence" value="ECO:0000250"/>
    <property type="project" value="UniProtKB"/>
</dbReference>
<dbReference type="GO" id="GO:1902600">
    <property type="term" value="P:proton transmembrane transport"/>
    <property type="evidence" value="ECO:0000250"/>
    <property type="project" value="UniProtKB"/>
</dbReference>
<dbReference type="CDD" id="cd00310">
    <property type="entry name" value="ATP-synt_Fo_a_6"/>
    <property type="match status" value="1"/>
</dbReference>
<dbReference type="FunFam" id="1.20.120.220:FF:000004">
    <property type="entry name" value="ATP synthase subunit a"/>
    <property type="match status" value="1"/>
</dbReference>
<dbReference type="Gene3D" id="1.20.120.220">
    <property type="entry name" value="ATP synthase, F0 complex, subunit A"/>
    <property type="match status" value="1"/>
</dbReference>
<dbReference type="InterPro" id="IPR000568">
    <property type="entry name" value="ATP_synth_F0_asu"/>
</dbReference>
<dbReference type="InterPro" id="IPR023011">
    <property type="entry name" value="ATP_synth_F0_asu_AS"/>
</dbReference>
<dbReference type="InterPro" id="IPR045083">
    <property type="entry name" value="ATP_synth_F0_asu_bact/mt"/>
</dbReference>
<dbReference type="InterPro" id="IPR035908">
    <property type="entry name" value="F0_ATP_A_sf"/>
</dbReference>
<dbReference type="NCBIfam" id="TIGR01131">
    <property type="entry name" value="ATP_synt_6_or_A"/>
    <property type="match status" value="1"/>
</dbReference>
<dbReference type="PANTHER" id="PTHR11410">
    <property type="entry name" value="ATP SYNTHASE SUBUNIT A"/>
    <property type="match status" value="1"/>
</dbReference>
<dbReference type="PANTHER" id="PTHR11410:SF0">
    <property type="entry name" value="ATP SYNTHASE SUBUNIT A"/>
    <property type="match status" value="1"/>
</dbReference>
<dbReference type="Pfam" id="PF00119">
    <property type="entry name" value="ATP-synt_A"/>
    <property type="match status" value="1"/>
</dbReference>
<dbReference type="PRINTS" id="PR00123">
    <property type="entry name" value="ATPASEA"/>
</dbReference>
<dbReference type="SUPFAM" id="SSF81336">
    <property type="entry name" value="F1F0 ATP synthase subunit A"/>
    <property type="match status" value="1"/>
</dbReference>
<dbReference type="PROSITE" id="PS00449">
    <property type="entry name" value="ATPASE_A"/>
    <property type="match status" value="1"/>
</dbReference>
<keyword id="KW-0066">ATP synthesis</keyword>
<keyword id="KW-0138">CF(0)</keyword>
<keyword id="KW-0375">Hydrogen ion transport</keyword>
<keyword id="KW-0406">Ion transport</keyword>
<keyword id="KW-0472">Membrane</keyword>
<keyword id="KW-0496">Mitochondrion</keyword>
<keyword id="KW-0999">Mitochondrion inner membrane</keyword>
<keyword id="KW-0812">Transmembrane</keyword>
<keyword id="KW-1133">Transmembrane helix</keyword>
<keyword id="KW-0813">Transport</keyword>
<name>ATP6_HALGR</name>
<comment type="function">
    <text evidence="1">Subunit a, of the mitochondrial membrane ATP synthase complex (F(1)F(0) ATP synthase or Complex V) that produces ATP from ADP in the presence of a proton gradient across the membrane which is generated by electron transport complexes of the respiratory chain. ATP synthase complex consist of a soluble F(1) head domain - the catalytic core - and a membrane F(1) domain - the membrane proton channel. These two domains are linked by a central stalk rotating inside the F(1) region and a stationary peripheral stalk. During catalysis, ATP synthesis in the catalytic domain of F(1) is coupled via a rotary mechanism of the central stalk subunits to proton translocation. With the subunit c (ATP5MC1), forms the proton-conducting channel in the F(0) domain, that contains two crucial half-channels (inlet and outlet) that facilitate proton movement from the mitochondrial intermembrane space (IMS) into the matrix. Protons are taken up via the inlet half-channel and released through the outlet half-channel, following a Grotthuss mechanism.</text>
</comment>
<comment type="catalytic activity">
    <reaction evidence="1">
        <text>H(+)(in) = H(+)(out)</text>
        <dbReference type="Rhea" id="RHEA:34979"/>
        <dbReference type="ChEBI" id="CHEBI:15378"/>
    </reaction>
</comment>
<comment type="subunit">
    <text evidence="1">Component of the ATP synthase complex composed at least of ATP5F1A/subunit alpha, ATP5F1B/subunit beta, ATP5MC1/subunit c (homooctomer), MT-ATP6/subunit a, MT-ATP8/subunit 8, ATP5ME/subunit e, ATP5MF/subunit f, ATP5MG/subunit g, ATP5MK/subunit k, ATP5MJ/subunit j, ATP5F1C/subunit gamma, ATP5F1D/subunit delta, ATP5F1E/subunit epsilon, ATP5PF/subunit F6, ATP5PB/subunit b, ATP5PD/subunit d, ATP5PO/subunit OSCP. ATP synthase complex consists of a soluble F(1) head domain (subunits alpha(3) and beta(3)) - the catalytic core - and a membrane F(0) domain - the membrane proton channel (subunits c, a, 8, e, f, g, k and j). These two domains are linked by a central stalk (subunits gamma, delta, and epsilon) rotating inside the F1 region and a stationary peripheral stalk (subunits F6, b, d, and OSCP). Interacts with DNAJC30; interaction is direct.</text>
</comment>
<comment type="subcellular location">
    <subcellularLocation>
        <location>Mitochondrion inner membrane</location>
        <topology>Multi-pass membrane protein</topology>
    </subcellularLocation>
</comment>
<comment type="similarity">
    <text evidence="3">Belongs to the ATPase A chain family.</text>
</comment>
<reference key="1">
    <citation type="journal article" date="1993" name="J. Mol. Evol.">
        <title>The nucleotide sequence of the mitochondrial DNA molecule of the grey seal, Halichoerus grypus, and a comparison with mitochondrial sequences of other true seals.</title>
        <authorList>
            <person name="Arnason U."/>
            <person name="Gullberg A."/>
            <person name="Johnsson E."/>
            <person name="Ledje C."/>
        </authorList>
    </citation>
    <scope>NUCLEOTIDE SEQUENCE [GENOMIC DNA]</scope>
</reference>
<sequence length="226" mass="24863">MNENLFASFTTPTMMGLPIVILIVLFPSILFPSPDRLINNRLTSIQQWLIQLTSKQMLSIHNHKGQTWALMLISLILFIGSTNLLGLLPHSFTPTTQLSMNLGMAIPLWAGTVITGFRHKTKASLAHFLPQGTPLPLIPMLVIIETISLFIQPMALAVRLTANITAGHLLIHLIGGATLALMDISTTTAFITFIVLILLTILEFAVALIQAYVFTLLVSLYLHDNT</sequence>
<organism>
    <name type="scientific">Halichoerus grypus</name>
    <name type="common">Gray seal</name>
    <name type="synonym">Phoca grypus</name>
    <dbReference type="NCBI Taxonomy" id="9711"/>
    <lineage>
        <taxon>Eukaryota</taxon>
        <taxon>Metazoa</taxon>
        <taxon>Chordata</taxon>
        <taxon>Craniata</taxon>
        <taxon>Vertebrata</taxon>
        <taxon>Euteleostomi</taxon>
        <taxon>Mammalia</taxon>
        <taxon>Eutheria</taxon>
        <taxon>Laurasiatheria</taxon>
        <taxon>Carnivora</taxon>
        <taxon>Caniformia</taxon>
        <taxon>Pinnipedia</taxon>
        <taxon>Phocidae</taxon>
        <taxon>Phocinae</taxon>
        <taxon>Halichoerus</taxon>
    </lineage>
</organism>
<geneLocation type="mitochondrion"/>
<protein>
    <recommendedName>
        <fullName evidence="1">ATP synthase F(0) complex subunit a</fullName>
    </recommendedName>
    <alternativeName>
        <fullName>F-ATPase protein 6</fullName>
    </alternativeName>
    <alternativeName>
        <fullName evidence="1">Proton-conducting channel, ATP synthase F(0) complex subunit a</fullName>
    </alternativeName>
</protein>
<proteinExistence type="inferred from homology"/>
<evidence type="ECO:0000250" key="1">
    <source>
        <dbReference type="UniProtKB" id="P00846"/>
    </source>
</evidence>
<evidence type="ECO:0000255" key="2"/>
<evidence type="ECO:0000305" key="3"/>
<feature type="chain" id="PRO_0000082124" description="ATP synthase F(0) complex subunit a">
    <location>
        <begin position="1"/>
        <end position="226"/>
    </location>
</feature>
<feature type="transmembrane region" description="Helical" evidence="2">
    <location>
        <begin position="12"/>
        <end position="32"/>
    </location>
</feature>
<feature type="transmembrane region" description="Helical" evidence="2">
    <location>
        <begin position="68"/>
        <end position="88"/>
    </location>
</feature>
<feature type="transmembrane region" description="Helical" evidence="2">
    <location>
        <begin position="97"/>
        <end position="117"/>
    </location>
</feature>
<feature type="transmembrane region" description="Helical" evidence="2">
    <location>
        <begin position="138"/>
        <end position="158"/>
    </location>
</feature>
<feature type="transmembrane region" description="Helical" evidence="2">
    <location>
        <begin position="164"/>
        <end position="184"/>
    </location>
</feature>
<feature type="transmembrane region" description="Helical" evidence="2">
    <location>
        <begin position="189"/>
        <end position="209"/>
    </location>
</feature>